<comment type="function">
    <text evidence="4 5 6">Major secreted lipase involved in Dandruff and seborrheic dermatitis (D/SD) probably via lipase-mediated breakdown of sebaceous lipids and release of irritating free fatty acids (PubMed:18000048, PubMed:22016565). Has triacylglycerol lipase activity and is able to hydrolyze triolein, tristearin, trilinolein, tripalmitoylglycerol and trihexadecenoin (PubMed:27130210). Hydrolyze diacylglycerols such as distearin, dilinolein, dipalmitoylglycerol and dipalmitolein (PubMed:27130210). Shows high esterase activity against 4-nitrophenyl palmitate and 1-naphthyl palmitate but not 1-naphthyl acetate, suggesting that it specifically recognizes fatty acids (PubMed:22016565). Mostly converts monoolein to di- and triolein, while free fatty acids are only produced in low amounts (PubMed:27130210).</text>
</comment>
<comment type="catalytic activity">
    <reaction evidence="5 6">
        <text>a triacylglycerol + H2O = a diacylglycerol + a fatty acid + H(+)</text>
        <dbReference type="Rhea" id="RHEA:12044"/>
        <dbReference type="ChEBI" id="CHEBI:15377"/>
        <dbReference type="ChEBI" id="CHEBI:15378"/>
        <dbReference type="ChEBI" id="CHEBI:17855"/>
        <dbReference type="ChEBI" id="CHEBI:18035"/>
        <dbReference type="ChEBI" id="CHEBI:28868"/>
        <dbReference type="EC" id="3.1.1.3"/>
    </reaction>
</comment>
<comment type="catalytic activity">
    <reaction evidence="5 6">
        <text>a monoacylglycerol + H2O = glycerol + a fatty acid + H(+)</text>
        <dbReference type="Rhea" id="RHEA:15245"/>
        <dbReference type="ChEBI" id="CHEBI:15377"/>
        <dbReference type="ChEBI" id="CHEBI:15378"/>
        <dbReference type="ChEBI" id="CHEBI:17408"/>
        <dbReference type="ChEBI" id="CHEBI:17754"/>
        <dbReference type="ChEBI" id="CHEBI:28868"/>
    </reaction>
</comment>
<comment type="catalytic activity">
    <reaction evidence="5 6">
        <text>a diacylglycerol + H2O = a monoacylglycerol + a fatty acid + H(+)</text>
        <dbReference type="Rhea" id="RHEA:32731"/>
        <dbReference type="ChEBI" id="CHEBI:15377"/>
        <dbReference type="ChEBI" id="CHEBI:15378"/>
        <dbReference type="ChEBI" id="CHEBI:17408"/>
        <dbReference type="ChEBI" id="CHEBI:18035"/>
        <dbReference type="ChEBI" id="CHEBI:28868"/>
    </reaction>
</comment>
<comment type="activity regulation">
    <text evidence="5">The activity is significantly increased in the presence of Triton X-100 and partially inhibited by PMSF but unaffected by univalent and divalent metal ions (PubMed:22016565). Activity is significantly decreased in acetate buffer compared to that in citrate buffer at the same pH (PubMed:22016565).</text>
</comment>
<comment type="biophysicochemical properties">
    <phDependence>
        <text evidence="5">Optimum pH is 5.0.</text>
    </phDependence>
    <temperatureDependence>
        <text evidence="5">Optimum temperature is 30 degrees Celsius.</text>
    </temperatureDependence>
</comment>
<comment type="subcellular location">
    <subcellularLocation>
        <location evidence="5">Secreted</location>
    </subcellularLocation>
</comment>
<comment type="similarity">
    <text evidence="8">Belongs to the AB hydrolase superfamily. Lipase family. Class Lip subfamily.</text>
</comment>
<sequence length="453" mass="49488">MKLSLVVLTLISVAAQALALVARENLPKPQNDPFYQPPDGWESKKVGTILRSRKVNINTLVKDNLKEAWQLLYRTTYRSDDEPTTTVTTIMVPHNAQNDSLVMFGDFEDAGAPQCAPSYTWRAGLTSDVSSIFNVGIAMLYLQEGYIVTMPDKEGNKGAFGSGHVEGRQSLDGIRATLAFDKIGLNKNARVVGHGYSGGGIQCGWTAALKKSYAPEINSVGWYTGGTPSNLTALVERINGGPFAGYVAGGLGGVISTYPDVKAYTDKVFTKQAQKDLEFPQKHCQFEVVLRFPFKNFYDKSFSTVGKRFLYEPVVQKALNELTMGTNPEFTPDTPVLMAHGISDEIAPYEAAHKTYESWCKNGADVEFLSFVNPVSAHGVTTVTSSVPGFLWNRDRLQGKPVQNGCREIKNHDAGINSNALGEDFESALGLLKGLLGDKIGPNDEYLKDALHK</sequence>
<accession>A8QCW4</accession>
<reference key="1">
    <citation type="journal article" date="2007" name="Proc. Natl. Acad. Sci. U.S.A.">
        <title>Dandruff-associated Malassezia genomes reveal convergent and divergent virulence traits shared with plant and human fungal pathogens.</title>
        <authorList>
            <person name="Xu J."/>
            <person name="Saunders C.W."/>
            <person name="Hu P."/>
            <person name="Grant R.A."/>
            <person name="Boekhout T."/>
            <person name="Kuramae E.E."/>
            <person name="Kronstad J.W."/>
            <person name="DeAngelis Y.M."/>
            <person name="Reeder N.L."/>
            <person name="Johnstone K.R."/>
            <person name="Leland M."/>
            <person name="Fieno A.M."/>
            <person name="Begley W.M."/>
            <person name="Sun Y."/>
            <person name="Lacey M.P."/>
            <person name="Chaudhary T."/>
            <person name="Keough T."/>
            <person name="Chu L."/>
            <person name="Sears R."/>
            <person name="Yuan B."/>
            <person name="Dawson T.L. Jr."/>
        </authorList>
    </citation>
    <scope>NUCLEOTIDE SEQUENCE [LARGE SCALE GENOMIC DNA]</scope>
    <scope>IDENTIFICATION</scope>
    <scope>FUNCTION</scope>
    <scope>SUBCELLULAR LOCATION</scope>
    <source>
        <strain>ATCC MYA-4612 / CBS 7966</strain>
    </source>
</reference>
<reference key="2">
    <citation type="journal article" date="2011" name="Microbiology">
        <title>Purification and characterization of a secretory lipolytic enzyme, MgLIP2, from Malassezia globosa.</title>
        <authorList>
            <person name="Juntachai W."/>
            <person name="Oura T."/>
            <person name="Kajiwara S."/>
        </authorList>
    </citation>
    <scope>FUNCTION</scope>
    <scope>CATALYTIC ACTIVITY</scope>
    <scope>ACTIVITY REGULATION</scope>
    <scope>BIOPHYSICOCHEMICAL PROPERTIES</scope>
</reference>
<reference key="3">
    <citation type="journal article" date="2016" name="Microbiology">
        <title>Secreted lipases from Malassezia globosa: recombinant expression and determination of their substrate specificities.</title>
        <authorList>
            <person name="Sommer B."/>
            <person name="Overy D.P."/>
            <person name="Haltli B."/>
            <person name="Kerr R.G."/>
        </authorList>
    </citation>
    <scope>FUNCTION</scope>
    <scope>CATALYTIC ACTIVITY</scope>
    <scope>SUBSTRATE SPECIFICITY</scope>
</reference>
<organism>
    <name type="scientific">Malassezia globosa (strain ATCC MYA-4612 / CBS 7966)</name>
    <name type="common">Dandruff-associated fungus</name>
    <dbReference type="NCBI Taxonomy" id="425265"/>
    <lineage>
        <taxon>Eukaryota</taxon>
        <taxon>Fungi</taxon>
        <taxon>Dikarya</taxon>
        <taxon>Basidiomycota</taxon>
        <taxon>Ustilaginomycotina</taxon>
        <taxon>Malasseziomycetes</taxon>
        <taxon>Malasseziales</taxon>
        <taxon>Malasseziaceae</taxon>
        <taxon>Malassezia</taxon>
    </lineage>
</organism>
<name>LIP2_MALGO</name>
<keyword id="KW-1015">Disulfide bond</keyword>
<keyword id="KW-0325">Glycoprotein</keyword>
<keyword id="KW-0378">Hydrolase</keyword>
<keyword id="KW-0442">Lipid degradation</keyword>
<keyword id="KW-0443">Lipid metabolism</keyword>
<keyword id="KW-1185">Reference proteome</keyword>
<keyword id="KW-0964">Secreted</keyword>
<keyword id="KW-0732">Signal</keyword>
<keyword id="KW-0843">Virulence</keyword>
<gene>
    <name evidence="7" type="primary">LIP2</name>
    <name type="ORF">MGL_4054</name>
</gene>
<protein>
    <recommendedName>
        <fullName evidence="7">Secreted triacylglycerol lipase LIP2</fullName>
        <ecNumber evidence="5 6">3.1.1.-</ecNumber>
        <ecNumber evidence="5 6">3.1.1.3</ecNumber>
    </recommendedName>
</protein>
<proteinExistence type="evidence at protein level"/>
<evidence type="ECO:0000250" key="1">
    <source>
        <dbReference type="UniProtKB" id="W3VKA4"/>
    </source>
</evidence>
<evidence type="ECO:0000255" key="2"/>
<evidence type="ECO:0000255" key="3">
    <source>
        <dbReference type="PROSITE-ProRule" id="PRU00498"/>
    </source>
</evidence>
<evidence type="ECO:0000269" key="4">
    <source>
    </source>
</evidence>
<evidence type="ECO:0000269" key="5">
    <source>
    </source>
</evidence>
<evidence type="ECO:0000269" key="6">
    <source>
    </source>
</evidence>
<evidence type="ECO:0000303" key="7">
    <source>
    </source>
</evidence>
<evidence type="ECO:0000305" key="8"/>
<evidence type="ECO:0000305" key="9">
    <source>
    </source>
</evidence>
<feature type="signal peptide" evidence="2">
    <location>
        <begin position="1"/>
        <end position="19"/>
    </location>
</feature>
<feature type="chain" id="PRO_0000459490" description="Secreted triacylglycerol lipase LIP2">
    <location>
        <begin position="20"/>
        <end position="453"/>
    </location>
</feature>
<feature type="active site" description="Nucleophile" evidence="9">
    <location>
        <position position="197"/>
    </location>
</feature>
<feature type="active site" evidence="9">
    <location>
        <position position="344"/>
    </location>
</feature>
<feature type="active site" evidence="9">
    <location>
        <position position="378"/>
    </location>
</feature>
<feature type="glycosylation site" description="N-linked (GlcNAc...) asparagine" evidence="3">
    <location>
        <position position="98"/>
    </location>
</feature>
<feature type="glycosylation site" description="N-linked (GlcNAc...) asparagine" evidence="3">
    <location>
        <position position="230"/>
    </location>
</feature>
<feature type="disulfide bond" evidence="1">
    <location>
        <begin position="115"/>
        <end position="284"/>
    </location>
</feature>
<feature type="disulfide bond" evidence="1">
    <location>
        <begin position="360"/>
        <end position="406"/>
    </location>
</feature>
<dbReference type="EC" id="3.1.1.-" evidence="5 6"/>
<dbReference type="EC" id="3.1.1.3" evidence="5 6"/>
<dbReference type="EMBL" id="AAYY01000018">
    <property type="protein sequence ID" value="EDP41673.1"/>
    <property type="molecule type" value="Genomic_DNA"/>
</dbReference>
<dbReference type="RefSeq" id="XP_001728887.1">
    <property type="nucleotide sequence ID" value="XM_001728835.1"/>
</dbReference>
<dbReference type="SMR" id="A8QCW4"/>
<dbReference type="ESTHER" id="malgo-a8qcw4">
    <property type="family name" value="Fungal-Bact_LIP"/>
</dbReference>
<dbReference type="GeneID" id="5853193"/>
<dbReference type="KEGG" id="mgl:MGL_4054"/>
<dbReference type="VEuPathDB" id="FungiDB:MGL_4054"/>
<dbReference type="InParanoid" id="A8QCW4"/>
<dbReference type="OMA" id="RDHASEH"/>
<dbReference type="OrthoDB" id="2373480at2759"/>
<dbReference type="BRENDA" id="3.1.1.79">
    <property type="organism ID" value="13511"/>
</dbReference>
<dbReference type="Proteomes" id="UP000008837">
    <property type="component" value="Unassembled WGS sequence"/>
</dbReference>
<dbReference type="GO" id="GO:0005576">
    <property type="term" value="C:extracellular region"/>
    <property type="evidence" value="ECO:0007669"/>
    <property type="project" value="UniProtKB-SubCell"/>
</dbReference>
<dbReference type="GO" id="GO:0004806">
    <property type="term" value="F:triacylglycerol lipase activity"/>
    <property type="evidence" value="ECO:0007669"/>
    <property type="project" value="InterPro"/>
</dbReference>
<dbReference type="GO" id="GO:0016042">
    <property type="term" value="P:lipid catabolic process"/>
    <property type="evidence" value="ECO:0007669"/>
    <property type="project" value="UniProtKB-KW"/>
</dbReference>
<dbReference type="Gene3D" id="1.10.260.130">
    <property type="match status" value="1"/>
</dbReference>
<dbReference type="Gene3D" id="3.40.50.1820">
    <property type="entry name" value="alpha/beta hydrolase"/>
    <property type="match status" value="1"/>
</dbReference>
<dbReference type="InterPro" id="IPR029058">
    <property type="entry name" value="AB_hydrolase_fold"/>
</dbReference>
<dbReference type="InterPro" id="IPR005152">
    <property type="entry name" value="Lipase_secreted"/>
</dbReference>
<dbReference type="PANTHER" id="PTHR34853">
    <property type="match status" value="1"/>
</dbReference>
<dbReference type="PANTHER" id="PTHR34853:SF1">
    <property type="entry name" value="LIPASE 5"/>
    <property type="match status" value="1"/>
</dbReference>
<dbReference type="Pfam" id="PF03583">
    <property type="entry name" value="LIP"/>
    <property type="match status" value="1"/>
</dbReference>
<dbReference type="PIRSF" id="PIRSF029171">
    <property type="entry name" value="Esterase_LipA"/>
    <property type="match status" value="1"/>
</dbReference>
<dbReference type="SUPFAM" id="SSF53474">
    <property type="entry name" value="alpha/beta-Hydrolases"/>
    <property type="match status" value="1"/>
</dbReference>